<gene>
    <name evidence="1" type="primary">rnhB</name>
    <name type="ordered locus">plu0686</name>
</gene>
<evidence type="ECO:0000255" key="1">
    <source>
        <dbReference type="HAMAP-Rule" id="MF_00052"/>
    </source>
</evidence>
<evidence type="ECO:0000255" key="2">
    <source>
        <dbReference type="PROSITE-ProRule" id="PRU01319"/>
    </source>
</evidence>
<sequence length="196" mass="21345">MEFIYPQASLIAGVDEVGRGPLVGAVVTAAVILDPLQPIVGLADSKKLSEKRREALYLEITEKALCWSLGRAEPAEIDQLNILHATMLAMQRAVANLPISPEYVLIDGNRCPKLPMPAQAVIKGDGLVAEISAASIVAKVTRDREMAELDQLFPEYGFAKHKGYPTAFHLEKLVQLGATEHHRKSFAPVKRAIGLK</sequence>
<dbReference type="EC" id="3.1.26.4" evidence="1"/>
<dbReference type="EMBL" id="BX571861">
    <property type="protein sequence ID" value="CAE12981.1"/>
    <property type="molecule type" value="Genomic_DNA"/>
</dbReference>
<dbReference type="SMR" id="Q7N8N3"/>
<dbReference type="STRING" id="243265.plu0686"/>
<dbReference type="KEGG" id="plu:plu0686"/>
<dbReference type="eggNOG" id="COG0164">
    <property type="taxonomic scope" value="Bacteria"/>
</dbReference>
<dbReference type="HOGENOM" id="CLU_036532_3_2_6"/>
<dbReference type="Proteomes" id="UP000002514">
    <property type="component" value="Chromosome"/>
</dbReference>
<dbReference type="GO" id="GO:0005737">
    <property type="term" value="C:cytoplasm"/>
    <property type="evidence" value="ECO:0007669"/>
    <property type="project" value="UniProtKB-SubCell"/>
</dbReference>
<dbReference type="GO" id="GO:0032299">
    <property type="term" value="C:ribonuclease H2 complex"/>
    <property type="evidence" value="ECO:0007669"/>
    <property type="project" value="TreeGrafter"/>
</dbReference>
<dbReference type="GO" id="GO:0030145">
    <property type="term" value="F:manganese ion binding"/>
    <property type="evidence" value="ECO:0007669"/>
    <property type="project" value="UniProtKB-UniRule"/>
</dbReference>
<dbReference type="GO" id="GO:0003723">
    <property type="term" value="F:RNA binding"/>
    <property type="evidence" value="ECO:0007669"/>
    <property type="project" value="InterPro"/>
</dbReference>
<dbReference type="GO" id="GO:0004523">
    <property type="term" value="F:RNA-DNA hybrid ribonuclease activity"/>
    <property type="evidence" value="ECO:0007669"/>
    <property type="project" value="UniProtKB-UniRule"/>
</dbReference>
<dbReference type="GO" id="GO:0043137">
    <property type="term" value="P:DNA replication, removal of RNA primer"/>
    <property type="evidence" value="ECO:0007669"/>
    <property type="project" value="TreeGrafter"/>
</dbReference>
<dbReference type="GO" id="GO:0006298">
    <property type="term" value="P:mismatch repair"/>
    <property type="evidence" value="ECO:0007669"/>
    <property type="project" value="TreeGrafter"/>
</dbReference>
<dbReference type="CDD" id="cd07182">
    <property type="entry name" value="RNase_HII_bacteria_HII_like"/>
    <property type="match status" value="1"/>
</dbReference>
<dbReference type="FunFam" id="3.30.420.10:FF:000006">
    <property type="entry name" value="Ribonuclease HII"/>
    <property type="match status" value="1"/>
</dbReference>
<dbReference type="Gene3D" id="3.30.420.10">
    <property type="entry name" value="Ribonuclease H-like superfamily/Ribonuclease H"/>
    <property type="match status" value="1"/>
</dbReference>
<dbReference type="HAMAP" id="MF_00052_B">
    <property type="entry name" value="RNase_HII_B"/>
    <property type="match status" value="1"/>
</dbReference>
<dbReference type="InterPro" id="IPR022898">
    <property type="entry name" value="RNase_HII"/>
</dbReference>
<dbReference type="InterPro" id="IPR001352">
    <property type="entry name" value="RNase_HII/HIII"/>
</dbReference>
<dbReference type="InterPro" id="IPR024567">
    <property type="entry name" value="RNase_HII/HIII_dom"/>
</dbReference>
<dbReference type="InterPro" id="IPR012337">
    <property type="entry name" value="RNaseH-like_sf"/>
</dbReference>
<dbReference type="InterPro" id="IPR036397">
    <property type="entry name" value="RNaseH_sf"/>
</dbReference>
<dbReference type="NCBIfam" id="NF000594">
    <property type="entry name" value="PRK00015.1-1"/>
    <property type="match status" value="1"/>
</dbReference>
<dbReference type="NCBIfam" id="NF000595">
    <property type="entry name" value="PRK00015.1-3"/>
    <property type="match status" value="1"/>
</dbReference>
<dbReference type="NCBIfam" id="NF000596">
    <property type="entry name" value="PRK00015.1-4"/>
    <property type="match status" value="1"/>
</dbReference>
<dbReference type="PANTHER" id="PTHR10954">
    <property type="entry name" value="RIBONUCLEASE H2 SUBUNIT A"/>
    <property type="match status" value="1"/>
</dbReference>
<dbReference type="PANTHER" id="PTHR10954:SF18">
    <property type="entry name" value="RIBONUCLEASE HII"/>
    <property type="match status" value="1"/>
</dbReference>
<dbReference type="Pfam" id="PF01351">
    <property type="entry name" value="RNase_HII"/>
    <property type="match status" value="1"/>
</dbReference>
<dbReference type="SUPFAM" id="SSF53098">
    <property type="entry name" value="Ribonuclease H-like"/>
    <property type="match status" value="1"/>
</dbReference>
<dbReference type="PROSITE" id="PS51975">
    <property type="entry name" value="RNASE_H_2"/>
    <property type="match status" value="1"/>
</dbReference>
<proteinExistence type="inferred from homology"/>
<organism>
    <name type="scientific">Photorhabdus laumondii subsp. laumondii (strain DSM 15139 / CIP 105565 / TT01)</name>
    <name type="common">Photorhabdus luminescens subsp. laumondii</name>
    <dbReference type="NCBI Taxonomy" id="243265"/>
    <lineage>
        <taxon>Bacteria</taxon>
        <taxon>Pseudomonadati</taxon>
        <taxon>Pseudomonadota</taxon>
        <taxon>Gammaproteobacteria</taxon>
        <taxon>Enterobacterales</taxon>
        <taxon>Morganellaceae</taxon>
        <taxon>Photorhabdus</taxon>
    </lineage>
</organism>
<reference key="1">
    <citation type="journal article" date="2003" name="Nat. Biotechnol.">
        <title>The genome sequence of the entomopathogenic bacterium Photorhabdus luminescens.</title>
        <authorList>
            <person name="Duchaud E."/>
            <person name="Rusniok C."/>
            <person name="Frangeul L."/>
            <person name="Buchrieser C."/>
            <person name="Givaudan A."/>
            <person name="Taourit S."/>
            <person name="Bocs S."/>
            <person name="Boursaux-Eude C."/>
            <person name="Chandler M."/>
            <person name="Charles J.-F."/>
            <person name="Dassa E."/>
            <person name="Derose R."/>
            <person name="Derzelle S."/>
            <person name="Freyssinet G."/>
            <person name="Gaudriault S."/>
            <person name="Medigue C."/>
            <person name="Lanois A."/>
            <person name="Powell K."/>
            <person name="Siguier P."/>
            <person name="Vincent R."/>
            <person name="Wingate V."/>
            <person name="Zouine M."/>
            <person name="Glaser P."/>
            <person name="Boemare N."/>
            <person name="Danchin A."/>
            <person name="Kunst F."/>
        </authorList>
    </citation>
    <scope>NUCLEOTIDE SEQUENCE [LARGE SCALE GENOMIC DNA]</scope>
    <source>
        <strain>DSM 15139 / CIP 105565 / TT01</strain>
    </source>
</reference>
<name>RNH2_PHOLL</name>
<feature type="chain" id="PRO_0000111599" description="Ribonuclease HII">
    <location>
        <begin position="1"/>
        <end position="196"/>
    </location>
</feature>
<feature type="domain" description="RNase H type-2" evidence="2">
    <location>
        <begin position="9"/>
        <end position="196"/>
    </location>
</feature>
<feature type="binding site" evidence="1">
    <location>
        <position position="15"/>
    </location>
    <ligand>
        <name>a divalent metal cation</name>
        <dbReference type="ChEBI" id="CHEBI:60240"/>
    </ligand>
</feature>
<feature type="binding site" evidence="1">
    <location>
        <position position="16"/>
    </location>
    <ligand>
        <name>a divalent metal cation</name>
        <dbReference type="ChEBI" id="CHEBI:60240"/>
    </ligand>
</feature>
<feature type="binding site" evidence="1">
    <location>
        <position position="107"/>
    </location>
    <ligand>
        <name>a divalent metal cation</name>
        <dbReference type="ChEBI" id="CHEBI:60240"/>
    </ligand>
</feature>
<accession>Q7N8N3</accession>
<protein>
    <recommendedName>
        <fullName evidence="1">Ribonuclease HII</fullName>
        <shortName evidence="1">RNase HII</shortName>
        <ecNumber evidence="1">3.1.26.4</ecNumber>
    </recommendedName>
</protein>
<comment type="function">
    <text evidence="1">Endonuclease that specifically degrades the RNA of RNA-DNA hybrids.</text>
</comment>
<comment type="catalytic activity">
    <reaction evidence="1">
        <text>Endonucleolytic cleavage to 5'-phosphomonoester.</text>
        <dbReference type="EC" id="3.1.26.4"/>
    </reaction>
</comment>
<comment type="cofactor">
    <cofactor evidence="1">
        <name>Mn(2+)</name>
        <dbReference type="ChEBI" id="CHEBI:29035"/>
    </cofactor>
    <cofactor evidence="1">
        <name>Mg(2+)</name>
        <dbReference type="ChEBI" id="CHEBI:18420"/>
    </cofactor>
    <text evidence="1">Manganese or magnesium. Binds 1 divalent metal ion per monomer in the absence of substrate. May bind a second metal ion after substrate binding.</text>
</comment>
<comment type="subcellular location">
    <subcellularLocation>
        <location evidence="1">Cytoplasm</location>
    </subcellularLocation>
</comment>
<comment type="similarity">
    <text evidence="1">Belongs to the RNase HII family.</text>
</comment>
<keyword id="KW-0963">Cytoplasm</keyword>
<keyword id="KW-0255">Endonuclease</keyword>
<keyword id="KW-0378">Hydrolase</keyword>
<keyword id="KW-0464">Manganese</keyword>
<keyword id="KW-0479">Metal-binding</keyword>
<keyword id="KW-0540">Nuclease</keyword>
<keyword id="KW-1185">Reference proteome</keyword>